<name>VATA_CHLTR</name>
<reference key="1">
    <citation type="journal article" date="1998" name="Science">
        <title>Genome sequence of an obligate intracellular pathogen of humans: Chlamydia trachomatis.</title>
        <authorList>
            <person name="Stephens R.S."/>
            <person name="Kalman S."/>
            <person name="Lammel C.J."/>
            <person name="Fan J."/>
            <person name="Marathe R."/>
            <person name="Aravind L."/>
            <person name="Mitchell W.P."/>
            <person name="Olinger L."/>
            <person name="Tatusov R.L."/>
            <person name="Zhao Q."/>
            <person name="Koonin E.V."/>
            <person name="Davis R.W."/>
        </authorList>
    </citation>
    <scope>NUCLEOTIDE SEQUENCE [LARGE SCALE GENOMIC DNA]</scope>
    <source>
        <strain>ATCC VR-885 / DSM 19411 / UW-3/Cx</strain>
    </source>
</reference>
<comment type="function">
    <text evidence="1">Produces ATP from ADP in the presence of a proton gradient across the membrane. The V-type alpha chain is a catalytic subunit (By similarity).</text>
</comment>
<comment type="catalytic activity">
    <reaction>
        <text>ATP + H2O + 4 H(+)(in) = ADP + phosphate + 5 H(+)(out)</text>
        <dbReference type="Rhea" id="RHEA:57720"/>
        <dbReference type="ChEBI" id="CHEBI:15377"/>
        <dbReference type="ChEBI" id="CHEBI:15378"/>
        <dbReference type="ChEBI" id="CHEBI:30616"/>
        <dbReference type="ChEBI" id="CHEBI:43474"/>
        <dbReference type="ChEBI" id="CHEBI:456216"/>
        <dbReference type="EC" id="7.1.2.2"/>
    </reaction>
</comment>
<comment type="similarity">
    <text evidence="3">Belongs to the ATPase alpha/beta chains family.</text>
</comment>
<gene>
    <name type="primary">atpA</name>
    <name type="ordered locus">CT_308</name>
</gene>
<dbReference type="EC" id="7.1.2.2"/>
<dbReference type="EMBL" id="AE001273">
    <property type="protein sequence ID" value="AAC67901.1"/>
    <property type="molecule type" value="Genomic_DNA"/>
</dbReference>
<dbReference type="PIR" id="B71531">
    <property type="entry name" value="B71531"/>
</dbReference>
<dbReference type="RefSeq" id="NP_219813.1">
    <property type="nucleotide sequence ID" value="NC_000117.1"/>
</dbReference>
<dbReference type="RefSeq" id="WP_009871655.1">
    <property type="nucleotide sequence ID" value="NC_000117.1"/>
</dbReference>
<dbReference type="SMR" id="O84310"/>
<dbReference type="STRING" id="272561.CT_308"/>
<dbReference type="EnsemblBacteria" id="AAC67901">
    <property type="protein sequence ID" value="AAC67901"/>
    <property type="gene ID" value="CT_308"/>
</dbReference>
<dbReference type="GeneID" id="884810"/>
<dbReference type="KEGG" id="ctr:CT_308"/>
<dbReference type="PATRIC" id="fig|272561.5.peg.329"/>
<dbReference type="HOGENOM" id="CLU_008162_1_1_0"/>
<dbReference type="InParanoid" id="O84310"/>
<dbReference type="OrthoDB" id="9803053at2"/>
<dbReference type="Proteomes" id="UP000000431">
    <property type="component" value="Chromosome"/>
</dbReference>
<dbReference type="GO" id="GO:0005524">
    <property type="term" value="F:ATP binding"/>
    <property type="evidence" value="ECO:0007669"/>
    <property type="project" value="UniProtKB-UniRule"/>
</dbReference>
<dbReference type="GO" id="GO:0046933">
    <property type="term" value="F:proton-transporting ATP synthase activity, rotational mechanism"/>
    <property type="evidence" value="ECO:0007669"/>
    <property type="project" value="UniProtKB-UniRule"/>
</dbReference>
<dbReference type="GO" id="GO:0046961">
    <property type="term" value="F:proton-transporting ATPase activity, rotational mechanism"/>
    <property type="evidence" value="ECO:0000318"/>
    <property type="project" value="GO_Central"/>
</dbReference>
<dbReference type="GO" id="GO:0042777">
    <property type="term" value="P:proton motive force-driven plasma membrane ATP synthesis"/>
    <property type="evidence" value="ECO:0007669"/>
    <property type="project" value="UniProtKB-UniRule"/>
</dbReference>
<dbReference type="GO" id="GO:1902600">
    <property type="term" value="P:proton transmembrane transport"/>
    <property type="evidence" value="ECO:0000318"/>
    <property type="project" value="GO_Central"/>
</dbReference>
<dbReference type="CDD" id="cd01426">
    <property type="entry name" value="ATP-synt_F1_V1_A1_AB_FliI_N"/>
    <property type="match status" value="1"/>
</dbReference>
<dbReference type="CDD" id="cd18111">
    <property type="entry name" value="ATP-synt_V_A-type_alpha_C"/>
    <property type="match status" value="1"/>
</dbReference>
<dbReference type="CDD" id="cd01134">
    <property type="entry name" value="V_A-ATPase_A"/>
    <property type="match status" value="1"/>
</dbReference>
<dbReference type="FunFam" id="1.10.1140.10:FF:000007">
    <property type="entry name" value="V-type ATP synthase alpha chain"/>
    <property type="match status" value="1"/>
</dbReference>
<dbReference type="FunFam" id="3.40.50.300:FF:000675">
    <property type="entry name" value="V-type ATP synthase alpha chain"/>
    <property type="match status" value="1"/>
</dbReference>
<dbReference type="Gene3D" id="2.30.30.650">
    <property type="match status" value="1"/>
</dbReference>
<dbReference type="Gene3D" id="2.40.50.100">
    <property type="match status" value="1"/>
</dbReference>
<dbReference type="Gene3D" id="1.10.1140.10">
    <property type="entry name" value="Bovine Mitochondrial F1-atpase, Atp Synthase Beta Chain, Chain D, domain 3"/>
    <property type="match status" value="1"/>
</dbReference>
<dbReference type="Gene3D" id="3.40.50.300">
    <property type="entry name" value="P-loop containing nucleotide triphosphate hydrolases"/>
    <property type="match status" value="1"/>
</dbReference>
<dbReference type="HAMAP" id="MF_00309">
    <property type="entry name" value="ATP_synth_A_arch"/>
    <property type="match status" value="1"/>
</dbReference>
<dbReference type="InterPro" id="IPR055190">
    <property type="entry name" value="ATP-synt_VA_C"/>
</dbReference>
<dbReference type="InterPro" id="IPR031686">
    <property type="entry name" value="ATP-synth_a_Xtn"/>
</dbReference>
<dbReference type="InterPro" id="IPR020003">
    <property type="entry name" value="ATPase_a/bsu_AS"/>
</dbReference>
<dbReference type="InterPro" id="IPR004100">
    <property type="entry name" value="ATPase_F1/V1/A1_a/bsu_N"/>
</dbReference>
<dbReference type="InterPro" id="IPR000194">
    <property type="entry name" value="ATPase_F1/V1/A1_a/bsu_nucl-bd"/>
</dbReference>
<dbReference type="InterPro" id="IPR024034">
    <property type="entry name" value="ATPase_F1/V1_b/a_C"/>
</dbReference>
<dbReference type="InterPro" id="IPR027417">
    <property type="entry name" value="P-loop_NTPase"/>
</dbReference>
<dbReference type="InterPro" id="IPR022878">
    <property type="entry name" value="V-ATPase_asu"/>
</dbReference>
<dbReference type="NCBIfam" id="NF003220">
    <property type="entry name" value="PRK04192.1"/>
    <property type="match status" value="1"/>
</dbReference>
<dbReference type="PANTHER" id="PTHR43607:SF1">
    <property type="entry name" value="H(+)-TRANSPORTING TWO-SECTOR ATPASE"/>
    <property type="match status" value="1"/>
</dbReference>
<dbReference type="PANTHER" id="PTHR43607">
    <property type="entry name" value="V-TYPE PROTON ATPASE CATALYTIC SUBUNIT A"/>
    <property type="match status" value="1"/>
</dbReference>
<dbReference type="Pfam" id="PF00006">
    <property type="entry name" value="ATP-synt_ab"/>
    <property type="match status" value="1"/>
</dbReference>
<dbReference type="Pfam" id="PF02874">
    <property type="entry name" value="ATP-synt_ab_N"/>
    <property type="match status" value="1"/>
</dbReference>
<dbReference type="Pfam" id="PF16886">
    <property type="entry name" value="ATP-synt_ab_Xtn"/>
    <property type="match status" value="1"/>
</dbReference>
<dbReference type="Pfam" id="PF22919">
    <property type="entry name" value="ATP-synt_VA_C"/>
    <property type="match status" value="1"/>
</dbReference>
<dbReference type="SUPFAM" id="SSF52540">
    <property type="entry name" value="P-loop containing nucleoside triphosphate hydrolases"/>
    <property type="match status" value="1"/>
</dbReference>
<dbReference type="PROSITE" id="PS00152">
    <property type="entry name" value="ATPASE_ALPHA_BETA"/>
    <property type="match status" value="1"/>
</dbReference>
<sequence>MVATSKQTTQGYVVEAYGNLLRVHVDGHVRQGEVAYVSVDDTWLKAEIIEVVGDEVKIQVFEETQGISRGALVTFSGHLLEAELGPGLLQGIFDGLQNRLEILADTSLFLRRGEYVNAICRETVWAYTQKASVGSVLSRGDVLGTVKEGRFDHKIMVPFSCFEEVTITWVISSGNYTVDTVVAKGRTSTGEELEFTMVQKWPIKQAFLEGEKVPSHEIMDVGLRVLDTQIPVLKGGTFCTPGPFGAGKTVLQHHLSKYAAVDIVVLCACGERAGEVVEILQEFPHLTDPHTGQSLMHRTCIICNTSSMPVAARESSIYLGITIAEYYRQMGLHILLLADSTSRWAQALREISGRLEEIPGEEAFPAYLASRIAAFYERGGAVKMKDGSEGSLTICGAVSPAGGNFEEPVTQATLSVVGAFCGLSKARADARRYPSIDPMISWSKYLDSVAEILEKKVPGWGESVKQASRFLEEGAEIGKRIEVVGEEGISMEDMEIFLKSELYDFCYLQQNAFDAEDCYCPFDRQIELFSLMNHIFNSRFCFDCPDNARSFFLELQSKIKTLNGQKFLSEEYQKGLEVIYKLLESKMVQTV</sequence>
<organism>
    <name type="scientific">Chlamydia trachomatis serovar D (strain ATCC VR-885 / DSM 19411 / UW-3/Cx)</name>
    <dbReference type="NCBI Taxonomy" id="272561"/>
    <lineage>
        <taxon>Bacteria</taxon>
        <taxon>Pseudomonadati</taxon>
        <taxon>Chlamydiota</taxon>
        <taxon>Chlamydiia</taxon>
        <taxon>Chlamydiales</taxon>
        <taxon>Chlamydiaceae</taxon>
        <taxon>Chlamydia/Chlamydophila group</taxon>
        <taxon>Chlamydia</taxon>
    </lineage>
</organism>
<proteinExistence type="inferred from homology"/>
<keyword id="KW-0066">ATP synthesis</keyword>
<keyword id="KW-0067">ATP-binding</keyword>
<keyword id="KW-0375">Hydrogen ion transport</keyword>
<keyword id="KW-0406">Ion transport</keyword>
<keyword id="KW-0547">Nucleotide-binding</keyword>
<keyword id="KW-1185">Reference proteome</keyword>
<keyword id="KW-1278">Translocase</keyword>
<keyword id="KW-0813">Transport</keyword>
<accession>O84310</accession>
<protein>
    <recommendedName>
        <fullName>V-type ATP synthase alpha chain</fullName>
        <ecNumber>7.1.2.2</ecNumber>
    </recommendedName>
    <alternativeName>
        <fullName>V-ATPase subunit A</fullName>
    </alternativeName>
</protein>
<evidence type="ECO:0000250" key="1"/>
<evidence type="ECO:0000255" key="2"/>
<evidence type="ECO:0000305" key="3"/>
<feature type="chain" id="PRO_0000144613" description="V-type ATP synthase alpha chain">
    <location>
        <begin position="1"/>
        <end position="591"/>
    </location>
</feature>
<feature type="binding site" evidence="2">
    <location>
        <begin position="242"/>
        <end position="249"/>
    </location>
    <ligand>
        <name>ATP</name>
        <dbReference type="ChEBI" id="CHEBI:30616"/>
    </ligand>
</feature>